<name>FTHS_STAA3</name>
<dbReference type="EC" id="6.3.4.3" evidence="1"/>
<dbReference type="EMBL" id="CP000255">
    <property type="protein sequence ID" value="ABD21556.1"/>
    <property type="molecule type" value="Genomic_DNA"/>
</dbReference>
<dbReference type="RefSeq" id="WP_000149404.1">
    <property type="nucleotide sequence ID" value="NZ_CP027476.1"/>
</dbReference>
<dbReference type="SMR" id="Q2FG06"/>
<dbReference type="KEGG" id="saa:SAUSA300_1678"/>
<dbReference type="HOGENOM" id="CLU_003601_3_3_9"/>
<dbReference type="UniPathway" id="UPA00193"/>
<dbReference type="Proteomes" id="UP000001939">
    <property type="component" value="Chromosome"/>
</dbReference>
<dbReference type="GO" id="GO:0005524">
    <property type="term" value="F:ATP binding"/>
    <property type="evidence" value="ECO:0007669"/>
    <property type="project" value="UniProtKB-UniRule"/>
</dbReference>
<dbReference type="GO" id="GO:0004329">
    <property type="term" value="F:formate-tetrahydrofolate ligase activity"/>
    <property type="evidence" value="ECO:0007669"/>
    <property type="project" value="UniProtKB-UniRule"/>
</dbReference>
<dbReference type="GO" id="GO:0035999">
    <property type="term" value="P:tetrahydrofolate interconversion"/>
    <property type="evidence" value="ECO:0007669"/>
    <property type="project" value="UniProtKB-UniRule"/>
</dbReference>
<dbReference type="CDD" id="cd00477">
    <property type="entry name" value="FTHFS"/>
    <property type="match status" value="1"/>
</dbReference>
<dbReference type="FunFam" id="3.30.1510.10:FF:000001">
    <property type="entry name" value="Formate--tetrahydrofolate ligase"/>
    <property type="match status" value="1"/>
</dbReference>
<dbReference type="FunFam" id="3.10.410.10:FF:000001">
    <property type="entry name" value="Putative formate--tetrahydrofolate ligase"/>
    <property type="match status" value="1"/>
</dbReference>
<dbReference type="Gene3D" id="3.30.1510.10">
    <property type="entry name" value="Domain 2, N(10)-formyltetrahydrofolate synthetase"/>
    <property type="match status" value="1"/>
</dbReference>
<dbReference type="Gene3D" id="3.10.410.10">
    <property type="entry name" value="Formyltetrahydrofolate synthetase, domain 3"/>
    <property type="match status" value="1"/>
</dbReference>
<dbReference type="Gene3D" id="3.40.50.300">
    <property type="entry name" value="P-loop containing nucleotide triphosphate hydrolases"/>
    <property type="match status" value="1"/>
</dbReference>
<dbReference type="HAMAP" id="MF_01543">
    <property type="entry name" value="FTHFS"/>
    <property type="match status" value="1"/>
</dbReference>
<dbReference type="InterPro" id="IPR000559">
    <property type="entry name" value="Formate_THF_ligase"/>
</dbReference>
<dbReference type="InterPro" id="IPR020628">
    <property type="entry name" value="Formate_THF_ligase_CS"/>
</dbReference>
<dbReference type="InterPro" id="IPR027417">
    <property type="entry name" value="P-loop_NTPase"/>
</dbReference>
<dbReference type="NCBIfam" id="NF010030">
    <property type="entry name" value="PRK13505.1"/>
    <property type="match status" value="1"/>
</dbReference>
<dbReference type="Pfam" id="PF01268">
    <property type="entry name" value="FTHFS"/>
    <property type="match status" value="1"/>
</dbReference>
<dbReference type="SUPFAM" id="SSF52540">
    <property type="entry name" value="P-loop containing nucleoside triphosphate hydrolases"/>
    <property type="match status" value="1"/>
</dbReference>
<dbReference type="PROSITE" id="PS00721">
    <property type="entry name" value="FTHFS_1"/>
    <property type="match status" value="1"/>
</dbReference>
<dbReference type="PROSITE" id="PS00722">
    <property type="entry name" value="FTHFS_2"/>
    <property type="match status" value="1"/>
</dbReference>
<comment type="catalytic activity">
    <reaction evidence="1">
        <text>(6S)-5,6,7,8-tetrahydrofolate + formate + ATP = (6R)-10-formyltetrahydrofolate + ADP + phosphate</text>
        <dbReference type="Rhea" id="RHEA:20221"/>
        <dbReference type="ChEBI" id="CHEBI:15740"/>
        <dbReference type="ChEBI" id="CHEBI:30616"/>
        <dbReference type="ChEBI" id="CHEBI:43474"/>
        <dbReference type="ChEBI" id="CHEBI:57453"/>
        <dbReference type="ChEBI" id="CHEBI:195366"/>
        <dbReference type="ChEBI" id="CHEBI:456216"/>
        <dbReference type="EC" id="6.3.4.3"/>
    </reaction>
</comment>
<comment type="pathway">
    <text evidence="1">One-carbon metabolism; tetrahydrofolate interconversion.</text>
</comment>
<comment type="similarity">
    <text evidence="1">Belongs to the formate--tetrahydrofolate ligase family.</text>
</comment>
<proteinExistence type="inferred from homology"/>
<keyword id="KW-0067">ATP-binding</keyword>
<keyword id="KW-0436">Ligase</keyword>
<keyword id="KW-0547">Nucleotide-binding</keyword>
<keyword id="KW-0554">One-carbon metabolism</keyword>
<feature type="chain" id="PRO_0000300545" description="Formate--tetrahydrofolate ligase">
    <location>
        <begin position="1"/>
        <end position="555"/>
    </location>
</feature>
<feature type="binding site" evidence="1">
    <location>
        <begin position="65"/>
        <end position="72"/>
    </location>
    <ligand>
        <name>ATP</name>
        <dbReference type="ChEBI" id="CHEBI:30616"/>
    </ligand>
</feature>
<accession>Q2FG06</accession>
<organism>
    <name type="scientific">Staphylococcus aureus (strain USA300)</name>
    <dbReference type="NCBI Taxonomy" id="367830"/>
    <lineage>
        <taxon>Bacteria</taxon>
        <taxon>Bacillati</taxon>
        <taxon>Bacillota</taxon>
        <taxon>Bacilli</taxon>
        <taxon>Bacillales</taxon>
        <taxon>Staphylococcaceae</taxon>
        <taxon>Staphylococcus</taxon>
    </lineage>
</organism>
<evidence type="ECO:0000255" key="1">
    <source>
        <dbReference type="HAMAP-Rule" id="MF_01543"/>
    </source>
</evidence>
<protein>
    <recommendedName>
        <fullName evidence="1">Formate--tetrahydrofolate ligase</fullName>
        <ecNumber evidence="1">6.3.4.3</ecNumber>
    </recommendedName>
    <alternativeName>
        <fullName evidence="1">Formyltetrahydrofolate synthetase</fullName>
        <shortName evidence="1">FHS</shortName>
        <shortName evidence="1">FTHFS</shortName>
    </alternativeName>
</protein>
<sequence length="555" mass="59884">MTHLSDLDIANQSTLQPIKDIAASVGISEDALEPYGHYKAKIDINKITPRENKGKVVLVTAMSPTPAGEGKSTVTVGLADAFHELNKNVMVALREPALGPTFGIKGGATGGGYAQVLPMEDINLHFNGDFHAITTANNALSAFIDNHIHQGNELGIDQRRIEWKRVLDMNDRALRHVNVGLGGPTNGVPREDGFNITVASEIMAILCLSRSIKDLKDKISRITIGYTRDRKPVTVADLKVEGALAMILKDAIKPNLVQSIEGTPALVHGGPFANIAHGCNSILATETARDLADIVVTEAGFGSDLGAEKFMDIKVREAGFDPAAVVVVATIRALKMHGGVAKDNLKEENVEAVKAGIVNLERHVNNIKKFGVEPVVAINAFIHDTDAEVEYVKSWAKENNVRIALTEVWKKGGKGGVDLANEVLEVIDQPNSFKPLYELELPLEQKIEKIVTEIYGGSKVTFSSKAQKQLKQFKENGWDNYPVCMAKTQYSFSDDQTLLGAPSGFEITIRELEAKTGAGFIVALTGAIMTMPGLPKKPAALNMDVTDDGHAIGLF</sequence>
<gene>
    <name evidence="1" type="primary">fhs</name>
    <name type="ordered locus">SAUSA300_1678</name>
</gene>
<reference key="1">
    <citation type="journal article" date="2006" name="Lancet">
        <title>Complete genome sequence of USA300, an epidemic clone of community-acquired meticillin-resistant Staphylococcus aureus.</title>
        <authorList>
            <person name="Diep B.A."/>
            <person name="Gill S.R."/>
            <person name="Chang R.F."/>
            <person name="Phan T.H."/>
            <person name="Chen J.H."/>
            <person name="Davidson M.G."/>
            <person name="Lin F."/>
            <person name="Lin J."/>
            <person name="Carleton H.A."/>
            <person name="Mongodin E.F."/>
            <person name="Sensabaugh G.F."/>
            <person name="Perdreau-Remington F."/>
        </authorList>
    </citation>
    <scope>NUCLEOTIDE SEQUENCE [LARGE SCALE GENOMIC DNA]</scope>
    <source>
        <strain>USA300</strain>
    </source>
</reference>